<keyword id="KW-0030">Aminoacyl-tRNA synthetase</keyword>
<keyword id="KW-0067">ATP-binding</keyword>
<keyword id="KW-0963">Cytoplasm</keyword>
<keyword id="KW-0436">Ligase</keyword>
<keyword id="KW-0547">Nucleotide-binding</keyword>
<keyword id="KW-0648">Protein biosynthesis</keyword>
<reference key="1">
    <citation type="journal article" date="2014" name="Stand. Genomic Sci.">
        <title>Complete genome sequence of Anabaena variabilis ATCC 29413.</title>
        <authorList>
            <person name="Thiel T."/>
            <person name="Pratte B.S."/>
            <person name="Zhong J."/>
            <person name="Goodwin L."/>
            <person name="Copeland A."/>
            <person name="Lucas S."/>
            <person name="Han C."/>
            <person name="Pitluck S."/>
            <person name="Land M.L."/>
            <person name="Kyrpides N.C."/>
            <person name="Woyke T."/>
        </authorList>
    </citation>
    <scope>NUCLEOTIDE SEQUENCE [LARGE SCALE GENOMIC DNA]</scope>
    <source>
        <strain>ATCC 29413 / PCC 7937</strain>
    </source>
</reference>
<gene>
    <name evidence="1" type="primary">hisS</name>
    <name type="ordered locus">Ava_2260</name>
</gene>
<feature type="chain" id="PRO_1000016310" description="Histidine--tRNA ligase">
    <location>
        <begin position="1"/>
        <end position="462"/>
    </location>
</feature>
<name>SYH_TRIV2</name>
<proteinExistence type="inferred from homology"/>
<comment type="catalytic activity">
    <reaction evidence="1">
        <text>tRNA(His) + L-histidine + ATP = L-histidyl-tRNA(His) + AMP + diphosphate + H(+)</text>
        <dbReference type="Rhea" id="RHEA:17313"/>
        <dbReference type="Rhea" id="RHEA-COMP:9665"/>
        <dbReference type="Rhea" id="RHEA-COMP:9689"/>
        <dbReference type="ChEBI" id="CHEBI:15378"/>
        <dbReference type="ChEBI" id="CHEBI:30616"/>
        <dbReference type="ChEBI" id="CHEBI:33019"/>
        <dbReference type="ChEBI" id="CHEBI:57595"/>
        <dbReference type="ChEBI" id="CHEBI:78442"/>
        <dbReference type="ChEBI" id="CHEBI:78527"/>
        <dbReference type="ChEBI" id="CHEBI:456215"/>
        <dbReference type="EC" id="6.1.1.21"/>
    </reaction>
</comment>
<comment type="subunit">
    <text evidence="1">Homodimer.</text>
</comment>
<comment type="subcellular location">
    <subcellularLocation>
        <location evidence="1">Cytoplasm</location>
    </subcellularLocation>
</comment>
<comment type="similarity">
    <text evidence="1">Belongs to the class-II aminoacyl-tRNA synthetase family.</text>
</comment>
<sequence>MAKNDKINFSTPSGFPEFLPSEKRLELYLLDTIRRVYESYGFTPIETPAVERLEVLQAKGNQGDNIIYGIDPILPPNRQAEKDKSGETGSEARALKFDQTVPLAAYIARHLNELTFPFARYQMDVVFRGERAKDGRFRQFRQCDIDVVGREKLSLLYDAQMPAIITEIFEAVHIGDFLIRINNRKVLTGFFQSLDISETQIKSCISIIDNLEKIGEAKVKLELEKEGINPEQTQKIIDFIKIDGSVDDVLDKLKHLSQTLPESEQFNLGVSELETVITGVRNLGVPDKRFCIDLAIARGLNYYTGTVYETTLIGHEALGSICSGGRYEELVGTFIGEKMPGVGISIGLTRLISRLLKAGILNTLPPTPAQVVVVNMQDNLMPTYLKVSQQLRQAGLNVITNFEKRQLGKQFQAADKQGIQFCVIIGADEAAAQKSSLKDLKSGEQVEVALADLPEEVKRRLT</sequence>
<organism>
    <name type="scientific">Trichormus variabilis (strain ATCC 29413 / PCC 7937)</name>
    <name type="common">Anabaena variabilis</name>
    <dbReference type="NCBI Taxonomy" id="240292"/>
    <lineage>
        <taxon>Bacteria</taxon>
        <taxon>Bacillati</taxon>
        <taxon>Cyanobacteriota</taxon>
        <taxon>Cyanophyceae</taxon>
        <taxon>Nostocales</taxon>
        <taxon>Nostocaceae</taxon>
        <taxon>Trichormus</taxon>
    </lineage>
</organism>
<accession>Q3MAV8</accession>
<dbReference type="EC" id="6.1.1.21" evidence="1"/>
<dbReference type="EMBL" id="CP000117">
    <property type="protein sequence ID" value="ABA21878.1"/>
    <property type="molecule type" value="Genomic_DNA"/>
</dbReference>
<dbReference type="SMR" id="Q3MAV8"/>
<dbReference type="STRING" id="240292.Ava_2260"/>
<dbReference type="KEGG" id="ava:Ava_2260"/>
<dbReference type="eggNOG" id="COG0124">
    <property type="taxonomic scope" value="Bacteria"/>
</dbReference>
<dbReference type="HOGENOM" id="CLU_025113_3_0_3"/>
<dbReference type="Proteomes" id="UP000002533">
    <property type="component" value="Chromosome"/>
</dbReference>
<dbReference type="GO" id="GO:0005737">
    <property type="term" value="C:cytoplasm"/>
    <property type="evidence" value="ECO:0007669"/>
    <property type="project" value="UniProtKB-SubCell"/>
</dbReference>
<dbReference type="GO" id="GO:0005524">
    <property type="term" value="F:ATP binding"/>
    <property type="evidence" value="ECO:0007669"/>
    <property type="project" value="UniProtKB-UniRule"/>
</dbReference>
<dbReference type="GO" id="GO:0004821">
    <property type="term" value="F:histidine-tRNA ligase activity"/>
    <property type="evidence" value="ECO:0007669"/>
    <property type="project" value="UniProtKB-UniRule"/>
</dbReference>
<dbReference type="GO" id="GO:0006427">
    <property type="term" value="P:histidyl-tRNA aminoacylation"/>
    <property type="evidence" value="ECO:0007669"/>
    <property type="project" value="UniProtKB-UniRule"/>
</dbReference>
<dbReference type="CDD" id="cd00773">
    <property type="entry name" value="HisRS-like_core"/>
    <property type="match status" value="1"/>
</dbReference>
<dbReference type="CDD" id="cd00859">
    <property type="entry name" value="HisRS_anticodon"/>
    <property type="match status" value="1"/>
</dbReference>
<dbReference type="Gene3D" id="3.40.50.800">
    <property type="entry name" value="Anticodon-binding domain"/>
    <property type="match status" value="1"/>
</dbReference>
<dbReference type="Gene3D" id="3.30.930.10">
    <property type="entry name" value="Bira Bifunctional Protein, Domain 2"/>
    <property type="match status" value="1"/>
</dbReference>
<dbReference type="HAMAP" id="MF_00127">
    <property type="entry name" value="His_tRNA_synth"/>
    <property type="match status" value="1"/>
</dbReference>
<dbReference type="InterPro" id="IPR006195">
    <property type="entry name" value="aa-tRNA-synth_II"/>
</dbReference>
<dbReference type="InterPro" id="IPR045864">
    <property type="entry name" value="aa-tRNA-synth_II/BPL/LPL"/>
</dbReference>
<dbReference type="InterPro" id="IPR004154">
    <property type="entry name" value="Anticodon-bd"/>
</dbReference>
<dbReference type="InterPro" id="IPR036621">
    <property type="entry name" value="Anticodon-bd_dom_sf"/>
</dbReference>
<dbReference type="InterPro" id="IPR015807">
    <property type="entry name" value="His-tRNA-ligase"/>
</dbReference>
<dbReference type="InterPro" id="IPR041715">
    <property type="entry name" value="HisRS-like_core"/>
</dbReference>
<dbReference type="InterPro" id="IPR004516">
    <property type="entry name" value="HisRS/HisZ"/>
</dbReference>
<dbReference type="InterPro" id="IPR033656">
    <property type="entry name" value="HisRS_anticodon"/>
</dbReference>
<dbReference type="NCBIfam" id="TIGR00442">
    <property type="entry name" value="hisS"/>
    <property type="match status" value="1"/>
</dbReference>
<dbReference type="PANTHER" id="PTHR11476:SF7">
    <property type="entry name" value="HISTIDINE--TRNA LIGASE"/>
    <property type="match status" value="1"/>
</dbReference>
<dbReference type="PANTHER" id="PTHR11476">
    <property type="entry name" value="HISTIDYL-TRNA SYNTHETASE"/>
    <property type="match status" value="1"/>
</dbReference>
<dbReference type="Pfam" id="PF03129">
    <property type="entry name" value="HGTP_anticodon"/>
    <property type="match status" value="1"/>
</dbReference>
<dbReference type="Pfam" id="PF13393">
    <property type="entry name" value="tRNA-synt_His"/>
    <property type="match status" value="1"/>
</dbReference>
<dbReference type="PIRSF" id="PIRSF001549">
    <property type="entry name" value="His-tRNA_synth"/>
    <property type="match status" value="1"/>
</dbReference>
<dbReference type="SUPFAM" id="SSF52954">
    <property type="entry name" value="Class II aaRS ABD-related"/>
    <property type="match status" value="1"/>
</dbReference>
<dbReference type="SUPFAM" id="SSF55681">
    <property type="entry name" value="Class II aaRS and biotin synthetases"/>
    <property type="match status" value="1"/>
</dbReference>
<dbReference type="PROSITE" id="PS50862">
    <property type="entry name" value="AA_TRNA_LIGASE_II"/>
    <property type="match status" value="1"/>
</dbReference>
<evidence type="ECO:0000255" key="1">
    <source>
        <dbReference type="HAMAP-Rule" id="MF_00127"/>
    </source>
</evidence>
<protein>
    <recommendedName>
        <fullName evidence="1">Histidine--tRNA ligase</fullName>
        <ecNumber evidence="1">6.1.1.21</ecNumber>
    </recommendedName>
    <alternativeName>
        <fullName evidence="1">Histidyl-tRNA synthetase</fullName>
        <shortName evidence="1">HisRS</shortName>
    </alternativeName>
</protein>